<feature type="chain" id="PRO_1000067401" description="Xaa-Pro dipeptidase">
    <location>
        <begin position="1"/>
        <end position="443"/>
    </location>
</feature>
<feature type="binding site" evidence="1">
    <location>
        <position position="246"/>
    </location>
    <ligand>
        <name>Mn(2+)</name>
        <dbReference type="ChEBI" id="CHEBI:29035"/>
        <label>2</label>
    </ligand>
</feature>
<feature type="binding site" evidence="1">
    <location>
        <position position="257"/>
    </location>
    <ligand>
        <name>Mn(2+)</name>
        <dbReference type="ChEBI" id="CHEBI:29035"/>
        <label>1</label>
    </ligand>
</feature>
<feature type="binding site" evidence="1">
    <location>
        <position position="257"/>
    </location>
    <ligand>
        <name>Mn(2+)</name>
        <dbReference type="ChEBI" id="CHEBI:29035"/>
        <label>2</label>
    </ligand>
</feature>
<feature type="binding site" evidence="1">
    <location>
        <position position="339"/>
    </location>
    <ligand>
        <name>Mn(2+)</name>
        <dbReference type="ChEBI" id="CHEBI:29035"/>
        <label>1</label>
    </ligand>
</feature>
<feature type="binding site" evidence="1">
    <location>
        <position position="384"/>
    </location>
    <ligand>
        <name>Mn(2+)</name>
        <dbReference type="ChEBI" id="CHEBI:29035"/>
        <label>1</label>
    </ligand>
</feature>
<feature type="binding site" evidence="1">
    <location>
        <position position="423"/>
    </location>
    <ligand>
        <name>Mn(2+)</name>
        <dbReference type="ChEBI" id="CHEBI:29035"/>
        <label>1</label>
    </ligand>
</feature>
<feature type="binding site" evidence="1">
    <location>
        <position position="423"/>
    </location>
    <ligand>
        <name>Mn(2+)</name>
        <dbReference type="ChEBI" id="CHEBI:29035"/>
        <label>2</label>
    </ligand>
</feature>
<proteinExistence type="inferred from homology"/>
<organism>
    <name type="scientific">Escherichia coli O9:H4 (strain HS)</name>
    <dbReference type="NCBI Taxonomy" id="331112"/>
    <lineage>
        <taxon>Bacteria</taxon>
        <taxon>Pseudomonadati</taxon>
        <taxon>Pseudomonadota</taxon>
        <taxon>Gammaproteobacteria</taxon>
        <taxon>Enterobacterales</taxon>
        <taxon>Enterobacteriaceae</taxon>
        <taxon>Escherichia</taxon>
    </lineage>
</organism>
<reference key="1">
    <citation type="journal article" date="2008" name="J. Bacteriol.">
        <title>The pangenome structure of Escherichia coli: comparative genomic analysis of E. coli commensal and pathogenic isolates.</title>
        <authorList>
            <person name="Rasko D.A."/>
            <person name="Rosovitz M.J."/>
            <person name="Myers G.S.A."/>
            <person name="Mongodin E.F."/>
            <person name="Fricke W.F."/>
            <person name="Gajer P."/>
            <person name="Crabtree J."/>
            <person name="Sebaihia M."/>
            <person name="Thomson N.R."/>
            <person name="Chaudhuri R."/>
            <person name="Henderson I.R."/>
            <person name="Sperandio V."/>
            <person name="Ravel J."/>
        </authorList>
    </citation>
    <scope>NUCLEOTIDE SEQUENCE [LARGE SCALE GENOMIC DNA]</scope>
    <source>
        <strain>HS</strain>
    </source>
</reference>
<comment type="function">
    <text evidence="1">Splits dipeptides with a prolyl residue in the C-terminal position.</text>
</comment>
<comment type="catalytic activity">
    <reaction evidence="1">
        <text>Xaa-L-Pro dipeptide + H2O = an L-alpha-amino acid + L-proline</text>
        <dbReference type="Rhea" id="RHEA:76407"/>
        <dbReference type="ChEBI" id="CHEBI:15377"/>
        <dbReference type="ChEBI" id="CHEBI:59869"/>
        <dbReference type="ChEBI" id="CHEBI:60039"/>
        <dbReference type="ChEBI" id="CHEBI:195196"/>
        <dbReference type="EC" id="3.4.13.9"/>
    </reaction>
</comment>
<comment type="cofactor">
    <cofactor evidence="1">
        <name>Mn(2+)</name>
        <dbReference type="ChEBI" id="CHEBI:29035"/>
    </cofactor>
    <text evidence="1">Binds 2 manganese ions per subunit.</text>
</comment>
<comment type="similarity">
    <text evidence="1">Belongs to the peptidase M24B family. Bacterial-type prolidase subfamily.</text>
</comment>
<evidence type="ECO:0000255" key="1">
    <source>
        <dbReference type="HAMAP-Rule" id="MF_01279"/>
    </source>
</evidence>
<dbReference type="EC" id="3.4.13.9" evidence="1"/>
<dbReference type="EMBL" id="CP000802">
    <property type="protein sequence ID" value="ABV08256.1"/>
    <property type="molecule type" value="Genomic_DNA"/>
</dbReference>
<dbReference type="RefSeq" id="WP_000444561.1">
    <property type="nucleotide sequence ID" value="NC_009800.1"/>
</dbReference>
<dbReference type="SMR" id="A8A6V2"/>
<dbReference type="MEROPS" id="M24.003"/>
<dbReference type="GeneID" id="86861950"/>
<dbReference type="KEGG" id="ecx:EcHS_A4070"/>
<dbReference type="HOGENOM" id="CLU_050675_0_0_6"/>
<dbReference type="GO" id="GO:0005829">
    <property type="term" value="C:cytosol"/>
    <property type="evidence" value="ECO:0007669"/>
    <property type="project" value="TreeGrafter"/>
</dbReference>
<dbReference type="GO" id="GO:0004177">
    <property type="term" value="F:aminopeptidase activity"/>
    <property type="evidence" value="ECO:0007669"/>
    <property type="project" value="TreeGrafter"/>
</dbReference>
<dbReference type="GO" id="GO:0046872">
    <property type="term" value="F:metal ion binding"/>
    <property type="evidence" value="ECO:0007669"/>
    <property type="project" value="UniProtKB-KW"/>
</dbReference>
<dbReference type="GO" id="GO:0008235">
    <property type="term" value="F:metalloexopeptidase activity"/>
    <property type="evidence" value="ECO:0007669"/>
    <property type="project" value="UniProtKB-UniRule"/>
</dbReference>
<dbReference type="GO" id="GO:0016795">
    <property type="term" value="F:phosphoric triester hydrolase activity"/>
    <property type="evidence" value="ECO:0007669"/>
    <property type="project" value="InterPro"/>
</dbReference>
<dbReference type="GO" id="GO:0102009">
    <property type="term" value="F:proline dipeptidase activity"/>
    <property type="evidence" value="ECO:0007669"/>
    <property type="project" value="UniProtKB-EC"/>
</dbReference>
<dbReference type="GO" id="GO:0006508">
    <property type="term" value="P:proteolysis"/>
    <property type="evidence" value="ECO:0007669"/>
    <property type="project" value="UniProtKB-KW"/>
</dbReference>
<dbReference type="CDD" id="cd01087">
    <property type="entry name" value="Prolidase"/>
    <property type="match status" value="1"/>
</dbReference>
<dbReference type="FunFam" id="3.40.350.10:FF:000002">
    <property type="entry name" value="Xaa-Pro dipeptidase"/>
    <property type="match status" value="1"/>
</dbReference>
<dbReference type="FunFam" id="3.90.230.10:FF:000006">
    <property type="entry name" value="Xaa-Pro dipeptidase"/>
    <property type="match status" value="1"/>
</dbReference>
<dbReference type="Gene3D" id="3.90.230.10">
    <property type="entry name" value="Creatinase/methionine aminopeptidase superfamily"/>
    <property type="match status" value="1"/>
</dbReference>
<dbReference type="Gene3D" id="3.40.350.10">
    <property type="entry name" value="Creatinase/prolidase N-terminal domain"/>
    <property type="match status" value="1"/>
</dbReference>
<dbReference type="HAMAP" id="MF_01279">
    <property type="entry name" value="X_Pro_dipeptid"/>
    <property type="match status" value="1"/>
</dbReference>
<dbReference type="InterPro" id="IPR029149">
    <property type="entry name" value="Creatin/AminoP/Spt16_N"/>
</dbReference>
<dbReference type="InterPro" id="IPR036005">
    <property type="entry name" value="Creatinase/aminopeptidase-like"/>
</dbReference>
<dbReference type="InterPro" id="IPR048819">
    <property type="entry name" value="PepQ_N"/>
</dbReference>
<dbReference type="InterPro" id="IPR000994">
    <property type="entry name" value="Pept_M24"/>
</dbReference>
<dbReference type="InterPro" id="IPR001131">
    <property type="entry name" value="Peptidase_M24B_aminopep-P_CS"/>
</dbReference>
<dbReference type="InterPro" id="IPR052433">
    <property type="entry name" value="X-Pro_dipept-like"/>
</dbReference>
<dbReference type="InterPro" id="IPR022846">
    <property type="entry name" value="X_Pro_dipept"/>
</dbReference>
<dbReference type="NCBIfam" id="NF010133">
    <property type="entry name" value="PRK13607.1"/>
    <property type="match status" value="1"/>
</dbReference>
<dbReference type="PANTHER" id="PTHR43226">
    <property type="entry name" value="XAA-PRO AMINOPEPTIDASE 3"/>
    <property type="match status" value="1"/>
</dbReference>
<dbReference type="PANTHER" id="PTHR43226:SF8">
    <property type="entry name" value="XAA-PRO DIPEPTIDASE"/>
    <property type="match status" value="1"/>
</dbReference>
<dbReference type="Pfam" id="PF21216">
    <property type="entry name" value="PepQ_N"/>
    <property type="match status" value="1"/>
</dbReference>
<dbReference type="Pfam" id="PF00557">
    <property type="entry name" value="Peptidase_M24"/>
    <property type="match status" value="1"/>
</dbReference>
<dbReference type="SUPFAM" id="SSF55920">
    <property type="entry name" value="Creatinase/aminopeptidase"/>
    <property type="match status" value="1"/>
</dbReference>
<dbReference type="PROSITE" id="PS00491">
    <property type="entry name" value="PROLINE_PEPTIDASE"/>
    <property type="match status" value="1"/>
</dbReference>
<gene>
    <name evidence="1" type="primary">pepQ</name>
    <name type="ordered locus">EcHS_A4070</name>
</gene>
<name>PEPQ_ECOHS</name>
<protein>
    <recommendedName>
        <fullName evidence="1">Xaa-Pro dipeptidase</fullName>
        <shortName evidence="1">X-Pro dipeptidase</shortName>
        <ecNumber evidence="1">3.4.13.9</ecNumber>
    </recommendedName>
    <alternativeName>
        <fullName evidence="1">Imidodipeptidase</fullName>
    </alternativeName>
    <alternativeName>
        <fullName evidence="1">Proline dipeptidase</fullName>
        <shortName evidence="1">Prolidase</shortName>
    </alternativeName>
</protein>
<sequence length="443" mass="50176">MESLASLYKNHIATLQERTRDALARFKLDALLIHSGELFNVFLDDHPYPFKVNPQFKAWVPVTQVPNCWLLVDGVNKPKLWFYLPVDYWHNVEPLPTSFWTEDVEVIALPKADGIGSLLPAARGNIGYIGPVPERALQLGIEASNINPKGVIDYLHYYRSFKTEYELACMREAQKMAVNGHRAAEEAFRSGMSEFDINIAYLTATGHRDTDVPYSNIVALNEHAAVLHYTKLDHQAPEEMRSFLLDAGAEYNGYAADLTRTWSAKSDNDYAQLVKDVNDEQLALIATMKAGVSYVDYHIQFHQRIAKLLRKHQIITDMSEEAMVENDLTGPFMPHGIGHPLGLQVHDVAGFMQDDSGTHLAAPAKYPYLRCTRILQPGMVLTIEPGIYFIESLLAPWREGQFSKHFNWQKIEALKPFGGIRIEDNVVIHENNVENMTRDLKLA</sequence>
<accession>A8A6V2</accession>
<keyword id="KW-0224">Dipeptidase</keyword>
<keyword id="KW-0378">Hydrolase</keyword>
<keyword id="KW-0464">Manganese</keyword>
<keyword id="KW-0479">Metal-binding</keyword>
<keyword id="KW-0482">Metalloprotease</keyword>
<keyword id="KW-0645">Protease</keyword>